<sequence>KTRTKDKYRVVYTDHQRLELEKEFHYSRYITIRRKSELAANLGLTERQVKIWFQNRRAKERKVNKKKQQQQQQQQQQPMPPTQLPLPLDGTPTPSGHPGSLCPTNAGLLGTPSPVPVKEEFLP</sequence>
<name>CDX1_RAT</name>
<accession>Q05095</accession>
<keyword id="KW-0010">Activator</keyword>
<keyword id="KW-0217">Developmental protein</keyword>
<keyword id="KW-0238">DNA-binding</keyword>
<keyword id="KW-0371">Homeobox</keyword>
<keyword id="KW-0539">Nucleus</keyword>
<keyword id="KW-1185">Reference proteome</keyword>
<keyword id="KW-0804">Transcription</keyword>
<keyword id="KW-0805">Transcription regulation</keyword>
<comment type="function">
    <text evidence="1">Plays a role in transcriptional regulation. Involved in activated KRAS-mediated transcriptional activation of PRKD1 in colorectal cancer (CRC) cells. Binds to the PRKD1 promoter in colorectal cancer (CRC) cells. Could play a role in the terminal differentiation of the intestine. Binds preferentially to methylated DNA.</text>
</comment>
<comment type="subcellular location">
    <subcellularLocation>
        <location>Nucleus</location>
    </subcellularLocation>
</comment>
<comment type="tissue specificity">
    <text>Intestinal epithelium.</text>
</comment>
<comment type="similarity">
    <text evidence="4">Belongs to the Caudal homeobox family.</text>
</comment>
<evidence type="ECO:0000250" key="1">
    <source>
        <dbReference type="UniProtKB" id="P47902"/>
    </source>
</evidence>
<evidence type="ECO:0000255" key="2">
    <source>
        <dbReference type="PROSITE-ProRule" id="PRU00108"/>
    </source>
</evidence>
<evidence type="ECO:0000256" key="3">
    <source>
        <dbReference type="SAM" id="MobiDB-lite"/>
    </source>
</evidence>
<evidence type="ECO:0000305" key="4"/>
<organism>
    <name type="scientific">Rattus norvegicus</name>
    <name type="common">Rat</name>
    <dbReference type="NCBI Taxonomy" id="10116"/>
    <lineage>
        <taxon>Eukaryota</taxon>
        <taxon>Metazoa</taxon>
        <taxon>Chordata</taxon>
        <taxon>Craniata</taxon>
        <taxon>Vertebrata</taxon>
        <taxon>Euteleostomi</taxon>
        <taxon>Mammalia</taxon>
        <taxon>Eutheria</taxon>
        <taxon>Euarchontoglires</taxon>
        <taxon>Glires</taxon>
        <taxon>Rodentia</taxon>
        <taxon>Myomorpha</taxon>
        <taxon>Muroidea</taxon>
        <taxon>Muridae</taxon>
        <taxon>Murinae</taxon>
        <taxon>Rattus</taxon>
    </lineage>
</organism>
<gene>
    <name type="primary">Cdx1</name>
    <name type="synonym">Cdx-1</name>
</gene>
<protein>
    <recommendedName>
        <fullName>Homeobox protein CDX-1</fullName>
    </recommendedName>
    <alternativeName>
        <fullName>Caudal-type homeobox protein 1</fullName>
    </alternativeName>
</protein>
<dbReference type="EMBL" id="M91450">
    <property type="protein sequence ID" value="AAA40907.1"/>
    <property type="molecule type" value="Genomic_DNA"/>
</dbReference>
<dbReference type="PIR" id="S27397">
    <property type="entry name" value="S27397"/>
</dbReference>
<dbReference type="SMR" id="Q05095"/>
<dbReference type="FunCoup" id="Q05095">
    <property type="interactions" value="130"/>
</dbReference>
<dbReference type="STRING" id="10116.ENSRNOP00000071345"/>
<dbReference type="GlyGen" id="Q05095">
    <property type="glycosylation" value="1 site"/>
</dbReference>
<dbReference type="PhosphoSitePlus" id="Q05095"/>
<dbReference type="PaxDb" id="10116-ENSRNOP00000025141"/>
<dbReference type="UCSC" id="RGD:621233">
    <property type="organism name" value="rat"/>
</dbReference>
<dbReference type="AGR" id="RGD:621233"/>
<dbReference type="RGD" id="621233">
    <property type="gene designation" value="Cdx1"/>
</dbReference>
<dbReference type="eggNOG" id="KOG0848">
    <property type="taxonomic scope" value="Eukaryota"/>
</dbReference>
<dbReference type="InParanoid" id="Q05095"/>
<dbReference type="PhylomeDB" id="Q05095"/>
<dbReference type="Proteomes" id="UP000002494">
    <property type="component" value="Unplaced"/>
</dbReference>
<dbReference type="GO" id="GO:0005634">
    <property type="term" value="C:nucleus"/>
    <property type="evidence" value="ECO:0007669"/>
    <property type="project" value="UniProtKB-SubCell"/>
</dbReference>
<dbReference type="GO" id="GO:0001228">
    <property type="term" value="F:DNA-binding transcription activator activity, RNA polymerase II-specific"/>
    <property type="evidence" value="ECO:0000266"/>
    <property type="project" value="RGD"/>
</dbReference>
<dbReference type="GO" id="GO:0003700">
    <property type="term" value="F:DNA-binding transcription factor activity"/>
    <property type="evidence" value="ECO:0000250"/>
    <property type="project" value="UniProtKB"/>
</dbReference>
<dbReference type="GO" id="GO:0008327">
    <property type="term" value="F:methyl-CpG binding"/>
    <property type="evidence" value="ECO:0000250"/>
    <property type="project" value="UniProtKB"/>
</dbReference>
<dbReference type="GO" id="GO:0000978">
    <property type="term" value="F:RNA polymerase II cis-regulatory region sequence-specific DNA binding"/>
    <property type="evidence" value="ECO:0000266"/>
    <property type="project" value="RGD"/>
</dbReference>
<dbReference type="GO" id="GO:1990837">
    <property type="term" value="F:sequence-specific double-stranded DNA binding"/>
    <property type="evidence" value="ECO:0000266"/>
    <property type="project" value="RGD"/>
</dbReference>
<dbReference type="GO" id="GO:0000976">
    <property type="term" value="F:transcription cis-regulatory region binding"/>
    <property type="evidence" value="ECO:0000250"/>
    <property type="project" value="UniProtKB"/>
</dbReference>
<dbReference type="GO" id="GO:0009952">
    <property type="term" value="P:anterior/posterior pattern specification"/>
    <property type="evidence" value="ECO:0000266"/>
    <property type="project" value="RGD"/>
</dbReference>
<dbReference type="GO" id="GO:0060349">
    <property type="term" value="P:bone morphogenesis"/>
    <property type="evidence" value="ECO:0000266"/>
    <property type="project" value="RGD"/>
</dbReference>
<dbReference type="GO" id="GO:0007389">
    <property type="term" value="P:pattern specification process"/>
    <property type="evidence" value="ECO:0000266"/>
    <property type="project" value="RGD"/>
</dbReference>
<dbReference type="GO" id="GO:0045944">
    <property type="term" value="P:positive regulation of transcription by RNA polymerase II"/>
    <property type="evidence" value="ECO:0000250"/>
    <property type="project" value="UniProtKB"/>
</dbReference>
<dbReference type="GO" id="GO:0014807">
    <property type="term" value="P:regulation of somitogenesis"/>
    <property type="evidence" value="ECO:0000250"/>
    <property type="project" value="UniProtKB"/>
</dbReference>
<dbReference type="CDD" id="cd00086">
    <property type="entry name" value="homeodomain"/>
    <property type="match status" value="1"/>
</dbReference>
<dbReference type="FunFam" id="1.10.10.60:FF:000574">
    <property type="entry name" value="Homeobox protein CHOX-CAD2"/>
    <property type="match status" value="1"/>
</dbReference>
<dbReference type="Gene3D" id="1.10.10.60">
    <property type="entry name" value="Homeodomain-like"/>
    <property type="match status" value="1"/>
</dbReference>
<dbReference type="InterPro" id="IPR047152">
    <property type="entry name" value="Caudal_homeobox"/>
</dbReference>
<dbReference type="InterPro" id="IPR001356">
    <property type="entry name" value="HD"/>
</dbReference>
<dbReference type="InterPro" id="IPR020479">
    <property type="entry name" value="HD_metazoa"/>
</dbReference>
<dbReference type="InterPro" id="IPR017970">
    <property type="entry name" value="Homeobox_CS"/>
</dbReference>
<dbReference type="InterPro" id="IPR009057">
    <property type="entry name" value="Homeodomain-like_sf"/>
</dbReference>
<dbReference type="InterPro" id="IPR000047">
    <property type="entry name" value="HTH_motif"/>
</dbReference>
<dbReference type="PANTHER" id="PTHR24332">
    <property type="entry name" value="HOMEOBOX PROTEIN CDX"/>
    <property type="match status" value="1"/>
</dbReference>
<dbReference type="PANTHER" id="PTHR24332:SF16">
    <property type="entry name" value="HOMEOBOX PROTEIN CDX-1"/>
    <property type="match status" value="1"/>
</dbReference>
<dbReference type="Pfam" id="PF00046">
    <property type="entry name" value="Homeodomain"/>
    <property type="match status" value="1"/>
</dbReference>
<dbReference type="PRINTS" id="PR00024">
    <property type="entry name" value="HOMEOBOX"/>
</dbReference>
<dbReference type="PRINTS" id="PR00031">
    <property type="entry name" value="HTHREPRESSR"/>
</dbReference>
<dbReference type="SMART" id="SM00389">
    <property type="entry name" value="HOX"/>
    <property type="match status" value="1"/>
</dbReference>
<dbReference type="SUPFAM" id="SSF46689">
    <property type="entry name" value="Homeodomain-like"/>
    <property type="match status" value="1"/>
</dbReference>
<dbReference type="PROSITE" id="PS00027">
    <property type="entry name" value="HOMEOBOX_1"/>
    <property type="match status" value="1"/>
</dbReference>
<dbReference type="PROSITE" id="PS50071">
    <property type="entry name" value="HOMEOBOX_2"/>
    <property type="match status" value="1"/>
</dbReference>
<reference key="1">
    <citation type="journal article" date="1992" name="FEBS Lett.">
        <title>Gradient expression of Cdx along the rat intestine throughout postnatal development.</title>
        <authorList>
            <person name="Freund J.-N."/>
            <person name="Boukamel R."/>
            <person name="Benazzouz A."/>
        </authorList>
    </citation>
    <scope>NUCLEOTIDE SEQUENCE [GENOMIC DNA]</scope>
    <source>
        <tissue>Intestine</tissue>
    </source>
</reference>
<feature type="chain" id="PRO_0000048848" description="Homeobox protein CDX-1">
    <location>
        <begin position="1" status="less than"/>
        <end position="123"/>
    </location>
</feature>
<feature type="DNA-binding region" description="Homeobox" evidence="2">
    <location>
        <begin position="5"/>
        <end position="64"/>
    </location>
</feature>
<feature type="region of interest" description="Interaction with DNA" evidence="1">
    <location>
        <begin position="8"/>
        <end position="29"/>
    </location>
</feature>
<feature type="region of interest" description="Interaction with 5-mCpG DNA" evidence="1">
    <location>
        <begin position="47"/>
        <end position="58"/>
    </location>
</feature>
<feature type="region of interest" description="Disordered" evidence="3">
    <location>
        <begin position="57"/>
        <end position="123"/>
    </location>
</feature>
<feature type="compositionally biased region" description="Basic residues" evidence="3">
    <location>
        <begin position="57"/>
        <end position="68"/>
    </location>
</feature>
<feature type="non-terminal residue">
    <location>
        <position position="1"/>
    </location>
</feature>
<proteinExistence type="evidence at transcript level"/>